<name>KCNK1_RAT</name>
<organism>
    <name type="scientific">Rattus norvegicus</name>
    <name type="common">Rat</name>
    <dbReference type="NCBI Taxonomy" id="10116"/>
    <lineage>
        <taxon>Eukaryota</taxon>
        <taxon>Metazoa</taxon>
        <taxon>Chordata</taxon>
        <taxon>Craniata</taxon>
        <taxon>Vertebrata</taxon>
        <taxon>Euteleostomi</taxon>
        <taxon>Mammalia</taxon>
        <taxon>Eutheria</taxon>
        <taxon>Euarchontoglires</taxon>
        <taxon>Glires</taxon>
        <taxon>Rodentia</taxon>
        <taxon>Myomorpha</taxon>
        <taxon>Muroidea</taxon>
        <taxon>Muridae</taxon>
        <taxon>Murinae</taxon>
        <taxon>Rattus</taxon>
    </lineage>
</organism>
<dbReference type="EMBL" id="AF022819">
    <property type="protein sequence ID" value="AAD09336.1"/>
    <property type="molecule type" value="mRNA"/>
</dbReference>
<dbReference type="EMBL" id="BC061807">
    <property type="protein sequence ID" value="AAH61807.1"/>
    <property type="molecule type" value="mRNA"/>
</dbReference>
<dbReference type="RefSeq" id="NP_067720.1">
    <property type="nucleotide sequence ID" value="NM_021688.3"/>
</dbReference>
<dbReference type="PDB" id="7SK0">
    <property type="method" value="EM"/>
    <property type="resolution" value="3.33 A"/>
    <property type="chains" value="A/B=1-336"/>
</dbReference>
<dbReference type="PDB" id="7SK1">
    <property type="method" value="EM"/>
    <property type="resolution" value="3.43 A"/>
    <property type="chains" value="A/B=1-336"/>
</dbReference>
<dbReference type="PDBsum" id="7SK0"/>
<dbReference type="PDBsum" id="7SK1"/>
<dbReference type="EMDB" id="EMD-25168"/>
<dbReference type="EMDB" id="EMD-25169"/>
<dbReference type="SMR" id="Q9Z2T2"/>
<dbReference type="FunCoup" id="Q9Z2T2">
    <property type="interactions" value="90"/>
</dbReference>
<dbReference type="STRING" id="10116.ENSRNOP00000070146"/>
<dbReference type="GlyCosmos" id="Q9Z2T2">
    <property type="glycosylation" value="1 site, No reported glycans"/>
</dbReference>
<dbReference type="GlyGen" id="Q9Z2T2">
    <property type="glycosylation" value="1 site"/>
</dbReference>
<dbReference type="iPTMnet" id="Q9Z2T2"/>
<dbReference type="PhosphoSitePlus" id="Q9Z2T2"/>
<dbReference type="PaxDb" id="10116-ENSRNOP00000027058"/>
<dbReference type="Ensembl" id="ENSRNOT00000027058.6">
    <property type="protein sequence ID" value="ENSRNOP00000027058.3"/>
    <property type="gene ID" value="ENSRNOG00000019937.6"/>
</dbReference>
<dbReference type="GeneID" id="59324"/>
<dbReference type="KEGG" id="rno:59324"/>
<dbReference type="UCSC" id="RGD:621447">
    <property type="organism name" value="rat"/>
</dbReference>
<dbReference type="AGR" id="RGD:621447"/>
<dbReference type="CTD" id="3775"/>
<dbReference type="RGD" id="621447">
    <property type="gene designation" value="Kcnk1"/>
</dbReference>
<dbReference type="eggNOG" id="KOG1418">
    <property type="taxonomic scope" value="Eukaryota"/>
</dbReference>
<dbReference type="GeneTree" id="ENSGT00940000155293"/>
<dbReference type="HOGENOM" id="CLU_022504_6_0_1"/>
<dbReference type="InParanoid" id="Q9Z2T2"/>
<dbReference type="OMA" id="SAWCFGL"/>
<dbReference type="OrthoDB" id="297496at2759"/>
<dbReference type="PhylomeDB" id="Q9Z2T2"/>
<dbReference type="TreeFam" id="TF313947"/>
<dbReference type="Reactome" id="R-RNO-1299308">
    <property type="pathway name" value="Tandem of pore domain in a weak inwardly rectifying K+ channels (TWIK)"/>
</dbReference>
<dbReference type="Reactome" id="R-RNO-5576886">
    <property type="pathway name" value="Phase 4 - resting membrane potential"/>
</dbReference>
<dbReference type="PRO" id="PR:Q9Z2T2"/>
<dbReference type="Proteomes" id="UP000002494">
    <property type="component" value="Chromosome 19"/>
</dbReference>
<dbReference type="Bgee" id="ENSRNOG00000019937">
    <property type="expression patterns" value="Expressed in cerebellum and 15 other cell types or tissues"/>
</dbReference>
<dbReference type="GO" id="GO:0016324">
    <property type="term" value="C:apical plasma membrane"/>
    <property type="evidence" value="ECO:0000314"/>
    <property type="project" value="RGD"/>
</dbReference>
<dbReference type="GO" id="GO:0031526">
    <property type="term" value="C:brush border membrane"/>
    <property type="evidence" value="ECO:0000314"/>
    <property type="project" value="RGD"/>
</dbReference>
<dbReference type="GO" id="GO:0030425">
    <property type="term" value="C:dendrite"/>
    <property type="evidence" value="ECO:0007669"/>
    <property type="project" value="UniProtKB-SubCell"/>
</dbReference>
<dbReference type="GO" id="GO:0005768">
    <property type="term" value="C:endosome"/>
    <property type="evidence" value="ECO:0000266"/>
    <property type="project" value="RGD"/>
</dbReference>
<dbReference type="GO" id="GO:1902937">
    <property type="term" value="C:inward rectifier potassium channel complex"/>
    <property type="evidence" value="ECO:0000266"/>
    <property type="project" value="RGD"/>
</dbReference>
<dbReference type="GO" id="GO:0016020">
    <property type="term" value="C:membrane"/>
    <property type="evidence" value="ECO:0000250"/>
    <property type="project" value="UniProtKB"/>
</dbReference>
<dbReference type="GO" id="GO:0043204">
    <property type="term" value="C:perikaryon"/>
    <property type="evidence" value="ECO:0007669"/>
    <property type="project" value="UniProtKB-SubCell"/>
</dbReference>
<dbReference type="GO" id="GO:0005886">
    <property type="term" value="C:plasma membrane"/>
    <property type="evidence" value="ECO:0000315"/>
    <property type="project" value="UniProtKB"/>
</dbReference>
<dbReference type="GO" id="GO:0034705">
    <property type="term" value="C:potassium channel complex"/>
    <property type="evidence" value="ECO:0000250"/>
    <property type="project" value="UniProtKB"/>
</dbReference>
<dbReference type="GO" id="GO:0055037">
    <property type="term" value="C:recycling endosome"/>
    <property type="evidence" value="ECO:0007669"/>
    <property type="project" value="UniProtKB-SubCell"/>
</dbReference>
<dbReference type="GO" id="GO:0097060">
    <property type="term" value="C:synaptic membrane"/>
    <property type="evidence" value="ECO:0007669"/>
    <property type="project" value="UniProtKB-SubCell"/>
</dbReference>
<dbReference type="GO" id="GO:0042802">
    <property type="term" value="F:identical protein binding"/>
    <property type="evidence" value="ECO:0000250"/>
    <property type="project" value="UniProtKB"/>
</dbReference>
<dbReference type="GO" id="GO:0005242">
    <property type="term" value="F:inward rectifier potassium channel activity"/>
    <property type="evidence" value="ECO:0000266"/>
    <property type="project" value="RGD"/>
</dbReference>
<dbReference type="GO" id="GO:0022834">
    <property type="term" value="F:ligand-gated channel activity"/>
    <property type="evidence" value="ECO:0000250"/>
    <property type="project" value="UniProtKB"/>
</dbReference>
<dbReference type="GO" id="GO:0005267">
    <property type="term" value="F:potassium channel activity"/>
    <property type="evidence" value="ECO:0000250"/>
    <property type="project" value="UniProtKB"/>
</dbReference>
<dbReference type="GO" id="GO:0022841">
    <property type="term" value="F:potassium ion leak channel activity"/>
    <property type="evidence" value="ECO:0000314"/>
    <property type="project" value="UniProtKB"/>
</dbReference>
<dbReference type="GO" id="GO:0046982">
    <property type="term" value="F:protein heterodimerization activity"/>
    <property type="evidence" value="ECO:0000250"/>
    <property type="project" value="UniProtKB"/>
</dbReference>
<dbReference type="GO" id="GO:0005272">
    <property type="term" value="F:sodium channel activity"/>
    <property type="evidence" value="ECO:0000314"/>
    <property type="project" value="UniProtKB"/>
</dbReference>
<dbReference type="GO" id="GO:1905030">
    <property type="term" value="F:voltage-gated monoatomic ion channel activity involved in regulation of postsynaptic membrane potential"/>
    <property type="evidence" value="ECO:0000266"/>
    <property type="project" value="RGD"/>
</dbReference>
<dbReference type="GO" id="GO:0071468">
    <property type="term" value="P:cellular response to acidic pH"/>
    <property type="evidence" value="ECO:0000314"/>
    <property type="project" value="UniProtKB"/>
</dbReference>
<dbReference type="GO" id="GO:1902476">
    <property type="term" value="P:chloride transmembrane transport"/>
    <property type="evidence" value="ECO:0000250"/>
    <property type="project" value="UniProtKB"/>
</dbReference>
<dbReference type="GO" id="GO:0014047">
    <property type="term" value="P:glutamate secretion"/>
    <property type="evidence" value="ECO:0000250"/>
    <property type="project" value="UniProtKB"/>
</dbReference>
<dbReference type="GO" id="GO:0071805">
    <property type="term" value="P:potassium ion transmembrane transport"/>
    <property type="evidence" value="ECO:0000314"/>
    <property type="project" value="UniProtKB"/>
</dbReference>
<dbReference type="GO" id="GO:0060075">
    <property type="term" value="P:regulation of resting membrane potential"/>
    <property type="evidence" value="ECO:0000250"/>
    <property type="project" value="UniProtKB"/>
</dbReference>
<dbReference type="GO" id="GO:0035094">
    <property type="term" value="P:response to nicotine"/>
    <property type="evidence" value="ECO:0000270"/>
    <property type="project" value="RGD"/>
</dbReference>
<dbReference type="GO" id="GO:0035725">
    <property type="term" value="P:sodium ion transmembrane transport"/>
    <property type="evidence" value="ECO:0000250"/>
    <property type="project" value="UniProtKB"/>
</dbReference>
<dbReference type="FunFam" id="1.10.287.70:FF:000076">
    <property type="entry name" value="Potassium channel subfamily K member"/>
    <property type="match status" value="1"/>
</dbReference>
<dbReference type="Gene3D" id="1.10.287.70">
    <property type="match status" value="1"/>
</dbReference>
<dbReference type="InterPro" id="IPR003280">
    <property type="entry name" value="2pore_dom_K_chnl"/>
</dbReference>
<dbReference type="InterPro" id="IPR003092">
    <property type="entry name" value="2pore_dom_K_chnl_TASK"/>
</dbReference>
<dbReference type="InterPro" id="IPR005408">
    <property type="entry name" value="2pore_dom_K_chnl_TWIK"/>
</dbReference>
<dbReference type="InterPro" id="IPR001779">
    <property type="entry name" value="2pore_dom_K_chnl_TWIK1"/>
</dbReference>
<dbReference type="InterPro" id="IPR013099">
    <property type="entry name" value="K_chnl_dom"/>
</dbReference>
<dbReference type="PANTHER" id="PTHR11003:SF59">
    <property type="entry name" value="POTASSIUM CHANNEL SUBFAMILY K MEMBER 1"/>
    <property type="match status" value="1"/>
</dbReference>
<dbReference type="PANTHER" id="PTHR11003">
    <property type="entry name" value="POTASSIUM CHANNEL, SUBFAMILY K"/>
    <property type="match status" value="1"/>
</dbReference>
<dbReference type="Pfam" id="PF07885">
    <property type="entry name" value="Ion_trans_2"/>
    <property type="match status" value="2"/>
</dbReference>
<dbReference type="PIRSF" id="PIRSF038061">
    <property type="entry name" value="K_channel_subfamily_K_type"/>
    <property type="match status" value="1"/>
</dbReference>
<dbReference type="PRINTS" id="PR01333">
    <property type="entry name" value="2POREKCHANEL"/>
</dbReference>
<dbReference type="PRINTS" id="PR01096">
    <property type="entry name" value="TWIK1CHANNEL"/>
</dbReference>
<dbReference type="PRINTS" id="PR01586">
    <property type="entry name" value="TWIKCHANNEL"/>
</dbReference>
<dbReference type="SUPFAM" id="SSF81324">
    <property type="entry name" value="Voltage-gated potassium channels"/>
    <property type="match status" value="2"/>
</dbReference>
<evidence type="ECO:0000250" key="1">
    <source>
        <dbReference type="UniProtKB" id="O00180"/>
    </source>
</evidence>
<evidence type="ECO:0000250" key="2">
    <source>
        <dbReference type="UniProtKB" id="O08581"/>
    </source>
</evidence>
<evidence type="ECO:0000255" key="3"/>
<evidence type="ECO:0000256" key="4">
    <source>
        <dbReference type="SAM" id="MobiDB-lite"/>
    </source>
</evidence>
<evidence type="ECO:0000269" key="5">
    <source>
    </source>
</evidence>
<evidence type="ECO:0000269" key="6">
    <source>
    </source>
</evidence>
<evidence type="ECO:0000269" key="7">
    <source>
    </source>
</evidence>
<evidence type="ECO:0000269" key="8">
    <source>
    </source>
</evidence>
<evidence type="ECO:0000269" key="9">
    <source>
    </source>
</evidence>
<evidence type="ECO:0000269" key="10">
    <source>
    </source>
</evidence>
<evidence type="ECO:0000269" key="11">
    <source>
    </source>
</evidence>
<evidence type="ECO:0000269" key="12">
    <source>
    </source>
</evidence>
<evidence type="ECO:0000269" key="13">
    <source>
    </source>
</evidence>
<evidence type="ECO:0000303" key="14">
    <source>
    </source>
</evidence>
<evidence type="ECO:0000305" key="15"/>
<evidence type="ECO:0000305" key="16">
    <source>
    </source>
</evidence>
<evidence type="ECO:0000305" key="17">
    <source>
    </source>
</evidence>
<evidence type="ECO:0000312" key="18">
    <source>
        <dbReference type="EMBL" id="AAD09336.1"/>
    </source>
</evidence>
<evidence type="ECO:0000312" key="19">
    <source>
        <dbReference type="EMBL" id="AAH61807.1"/>
    </source>
</evidence>
<evidence type="ECO:0000312" key="20">
    <source>
        <dbReference type="RGD" id="621447"/>
    </source>
</evidence>
<evidence type="ECO:0007744" key="21">
    <source>
    </source>
</evidence>
<evidence type="ECO:0007829" key="22">
    <source>
        <dbReference type="PDB" id="7SK0"/>
    </source>
</evidence>
<evidence type="ECO:0007829" key="23">
    <source>
        <dbReference type="PDB" id="7SK1"/>
    </source>
</evidence>
<accession>Q9Z2T2</accession>
<comment type="function">
    <text evidence="1 2 7 9 10">Ion channel that contributes to passive transmembrane potassium transport and to the regulation of the resting membrane potential in brain astrocytes, but also in kidney and in other tissues (PubMed:17452494, PubMed:19571146). Forms dimeric channels through which potassium ions pass in accordance with their electrochemical gradient. The channel is selective for K(+) ions at physiological potassium concentrations and at neutral pH, but becomes permeable to Na(+) at subphysiological K(+) levels and upon acidification of the extracellular medium (PubMed:22948150). The homodimer has very low potassium channel activity, when expressed in heterologous systems, and can function as weakly inward rectifying potassium channel. Channel activity is modulated by activation of serotonin receptors (PubMed:17452494). Heterodimeric channels containing KCNK1 and KCNK2 have much higher activity, and may represent the predominant form in astrocytes (By similarity). Heterodimeric channels containing KCNK1 and KCNK3 or KCNK9 have much higher activity. Heterodimeric channels formed by KCNK1 and KCNK9 may contribute to halothane-sensitive currents (By similarity). Mediates outward rectifying potassium currents in dentate gyrus granule cells and contributes to the regulation of their resting membrane potential (By similarity). Contributes to the regulation of action potential firing in dentate gyrus granule cells and down-regulates their intrinsic excitability (By similarity). Contributes to the regulation of the resting membrane potential of pancreatic beta cells (By similarity). In astrocytes, the heterodimer formed by KCNK1 and KCNK2 is required for rapid glutamate release in response to activation of G-protein coupled receptors, such as F2R and CNR1 (By similarity). Required for normal ion and water transport in the kidney (By similarity). The low channel activity of homodimeric KCNK1 may be due to sumoylation. The low channel activity may be due to rapid internalization from the cell membrane and retention in recycling endosomes (By similarity). Permeable to monovalent cations with ion selectivity for K(+) &gt; Rb(+) &gt;&gt; NH4(+) &gt;&gt; Cs(+) = Na(+) = Li(+).</text>
</comment>
<comment type="catalytic activity">
    <reaction evidence="9">
        <text>K(+)(in) = K(+)(out)</text>
        <dbReference type="Rhea" id="RHEA:29463"/>
        <dbReference type="ChEBI" id="CHEBI:29103"/>
    </reaction>
</comment>
<comment type="catalytic activity">
    <reaction evidence="1">
        <text>NH4(+)(in) = NH4(+)(out)</text>
        <dbReference type="Rhea" id="RHEA:28747"/>
        <dbReference type="ChEBI" id="CHEBI:28938"/>
    </reaction>
</comment>
<comment type="catalytic activity">
    <reaction evidence="16">
        <text>Na(+)(in) = Na(+)(out)</text>
        <dbReference type="Rhea" id="RHEA:34963"/>
        <dbReference type="ChEBI" id="CHEBI:29101"/>
    </reaction>
</comment>
<comment type="catalytic activity">
    <reaction evidence="9">
        <text>Rb(+)(in) = Rb(+)(out)</text>
        <dbReference type="Rhea" id="RHEA:78547"/>
        <dbReference type="ChEBI" id="CHEBI:49847"/>
    </reaction>
</comment>
<comment type="catalytic activity">
    <reaction evidence="16">
        <text>Cs(+)(in) = Cs(+)(out)</text>
        <dbReference type="Rhea" id="RHEA:78555"/>
        <dbReference type="ChEBI" id="CHEBI:49547"/>
    </reaction>
</comment>
<comment type="catalytic activity">
    <reaction evidence="16">
        <text>Li(+)(in) = Li(+)(out)</text>
        <dbReference type="Rhea" id="RHEA:78551"/>
        <dbReference type="ChEBI" id="CHEBI:49713"/>
    </reaction>
</comment>
<comment type="catalytic activity">
    <reaction evidence="2">
        <text>L-glutamate(out) = L-glutamate(in)</text>
        <dbReference type="Rhea" id="RHEA:66336"/>
        <dbReference type="ChEBI" id="CHEBI:29985"/>
    </reaction>
</comment>
<comment type="catalytic activity">
    <reaction evidence="2">
        <text>chloride(in) = chloride(out)</text>
        <dbReference type="Rhea" id="RHEA:29823"/>
        <dbReference type="ChEBI" id="CHEBI:17996"/>
    </reaction>
</comment>
<comment type="activity regulation">
    <text evidence="7 10">Inhibited by 100 uM quinine. Slightly inhibited by Ba(+) (PubMed:17452494). Activity is first increased and then decreased when the extracellular pH is lowered to 6.0 (PubMed:17452494, PubMed:22948150).</text>
</comment>
<comment type="biophysicochemical properties">
    <kinetics>
        <text evidence="9 15">Both activation and channel closure are very rapid. Is not voltage-gated (PubMed:19571146). The relationship between voltage and current is nearly linear (PubMed:19571146).</text>
    </kinetics>
</comment>
<comment type="subunit">
    <text evidence="1 2 17">Homodimer; disulfide-linked (PubMed:9843722). Heterodimer with KCNK2; disulfide-linked (By similarity). In astrocytes, forms mostly heterodimeric potassium channels with KCNK2, with only a minor proportion of functional channels containing homodimeric KCNK1 (By similarity). Interacts with KCNK3 and KCNK9, forming functional heterodimeric channels (By similarity). Interacts with GNG4 (By similarity). Identified in a complex with PSD and ARF6; interacts only with PSD that is bound to ARF6 (By similarity). Interacts with UBE2I (By similarity).</text>
</comment>
<comment type="subcellular location">
    <subcellularLocation>
        <location evidence="7 9 10">Cell membrane</location>
        <topology evidence="1">Multi-pass membrane protein</topology>
    </subcellularLocation>
    <subcellularLocation>
        <location evidence="1">Recycling endosome</location>
    </subcellularLocation>
    <subcellularLocation>
        <location evidence="6 13">Apical cell membrane</location>
        <topology evidence="1">Multi-pass membrane protein</topology>
    </subcellularLocation>
    <subcellularLocation>
        <location evidence="13">Cytoplasmic vesicle</location>
    </subcellularLocation>
    <subcellularLocation>
        <location evidence="8 9">Perikaryon</location>
    </subcellularLocation>
    <subcellularLocation>
        <location evidence="2">Cell projection</location>
        <location evidence="2">Dendrite</location>
    </subcellularLocation>
    <subcellularLocation>
        <location evidence="2">Cell projection</location>
    </subcellularLocation>
    <subcellularLocation>
        <location evidence="13">Synaptic cell membrane</location>
    </subcellularLocation>
    <text evidence="1 2 6 13">The heterodimer with KCNK2 is detected at the astrocyte cell membrane. Not detected at the astrocyte cell membrane when KCNK2 is absent. Detected on neuronal cell bodies, and to a lesser degree on neuronal cell projections (By similarity). Detected in synaptic membranes (PubMed:9843722). Detected at the apical cell membrane in stria vascularis in the cochlea (PubMed:12855359). Detected on hippocampus dentate gyrus granule cell bodies and to a lesser degree on proximal dendrites. Detected at the apical cell membrane of vestibular dark cells situated between the crista and the utricle in the inner ear. Detected at the apical cell membrane in kidney proximal tubule segment S1 and in subapical compartments in segments S1, S2 and S3 (PubMed:9843722). Predominantly in cytoplasmic structures in kidney distal convoluted tubules and collecting ducts (By similarity). Detected at the apical cell membrane of bronchial epithelial cells (By similarity).</text>
</comment>
<comment type="tissue specificity">
    <text evidence="5 6 8 9 11 12 13">Detected in brain and in kidney cortex and medulla, especially at the renal brush border membranes of the proximal convoluted tubules, in distal tubules and on intercalated cells of the collecting duct (PubMed:9843722). Detected in cerebellum granule neurons (PubMed:23169818, PubMed:25305496). Detected in astrocytes in hippocampus stratum radiatum (PubMed:19571146). Highly expressed in the stria vascularis in the cochlea (PubMed:12855359). Detected in neurons in Scarpa's ganglion in the inner ear, at nerve terminals in the crista ampullaris, in supporting cells and dark cells, but not in hair cells (PubMed:18838117) (at protein level). Detected in the brain cerebellar granule cell layer, amygdala, thalamus reticular nucleus, habenula, mesencephalic trigeminal neurons, neocortex and piriform cortex, and at lower levels in the olfactory bulb (PubMed:11567039). Detected in Scarpa's ganglia and crista ampullaris in the inner ear (PubMed:18838117).</text>
</comment>
<comment type="PTM">
    <text evidence="1">Sumoylation is controversial. Sumoylated by UBE2I. Not sumoylated when expressed in xenopus oocytes or mammalian cells. Sumoylation inactivates the channel, but does not interfere with expression at the cell membrane. Sumoylation of a single subunit is sufficient to silence the dimeric channel. Sumoylation of KCNK1 is sufficient to silence heterodimeric channels formed by KCNK1 and KCNK3 or KCNK9. Desumoylated by SENP1; this activates the channel. Desumoylated by SENP1; this strongly increases halothane-mediated activation of heterodimeric channels formed with KCNK9. SENP1 treatment has no effect.</text>
</comment>
<comment type="miscellaneous">
    <text evidence="10">When the external pH is lowered, it takes about 8 minutes till the channel has reached a new, stable state characterized by increased Na(+) permeability. Likewise, when raising the pH back to 7.4, it takes about 12 minutes for the channel to regain its original selectivity for K(+).</text>
</comment>
<comment type="similarity">
    <text evidence="3">Belongs to the two pore domain potassium channel (TC 1.A.1.8) family.</text>
</comment>
<proteinExistence type="evidence at protein level"/>
<gene>
    <name evidence="20" type="primary">Kcnk1</name>
</gene>
<feature type="chain" id="PRO_0000299071" description="Potassium channel subfamily K member 1">
    <location>
        <begin position="1"/>
        <end position="336"/>
    </location>
</feature>
<feature type="topological domain" description="Cytoplasmic" evidence="1">
    <location>
        <begin position="1"/>
        <end position="20"/>
    </location>
</feature>
<feature type="transmembrane region" description="Helical" evidence="1">
    <location>
        <begin position="21"/>
        <end position="41"/>
    </location>
</feature>
<feature type="topological domain" description="Extracellular" evidence="1">
    <location>
        <begin position="42"/>
        <end position="103"/>
    </location>
</feature>
<feature type="intramembrane region" description="Helical; Name=Pore helix 1" evidence="1">
    <location>
        <begin position="104"/>
        <end position="116"/>
    </location>
</feature>
<feature type="intramembrane region" evidence="1">
    <location>
        <begin position="117"/>
        <end position="122"/>
    </location>
</feature>
<feature type="topological domain" description="Extracellular" evidence="1">
    <location>
        <begin position="123"/>
        <end position="132"/>
    </location>
</feature>
<feature type="transmembrane region" description="Helical" evidence="1">
    <location>
        <begin position="133"/>
        <end position="156"/>
    </location>
</feature>
<feature type="topological domain" description="Cytoplasmic" evidence="1">
    <location>
        <begin position="157"/>
        <end position="181"/>
    </location>
</feature>
<feature type="transmembrane region" description="Helical" evidence="1">
    <location>
        <begin position="182"/>
        <end position="202"/>
    </location>
</feature>
<feature type="topological domain" description="Extracellular" evidence="1">
    <location>
        <begin position="203"/>
        <end position="211"/>
    </location>
</feature>
<feature type="intramembrane region" description="Helical; Name=Pore helix 2" evidence="1">
    <location>
        <begin position="212"/>
        <end position="224"/>
    </location>
</feature>
<feature type="intramembrane region" evidence="1">
    <location>
        <begin position="225"/>
        <end position="231"/>
    </location>
</feature>
<feature type="topological domain" description="Extracellular" evidence="1">
    <location>
        <begin position="232"/>
        <end position="243"/>
    </location>
</feature>
<feature type="transmembrane region" description="Helical" evidence="1">
    <location>
        <begin position="244"/>
        <end position="267"/>
    </location>
</feature>
<feature type="topological domain" description="Cytoplasmic" evidence="1">
    <location>
        <begin position="268"/>
        <end position="336"/>
    </location>
</feature>
<feature type="region of interest" description="Selectivity filter 1" evidence="1">
    <location>
        <begin position="117"/>
        <end position="122"/>
    </location>
</feature>
<feature type="region of interest" description="Selectivity filter 2" evidence="1">
    <location>
        <begin position="225"/>
        <end position="230"/>
    </location>
</feature>
<feature type="region of interest" description="Important for intracellular retention in recycling endosomes" evidence="1">
    <location>
        <begin position="293"/>
        <end position="299"/>
    </location>
</feature>
<feature type="region of interest" description="Disordered" evidence="4">
    <location>
        <begin position="310"/>
        <end position="336"/>
    </location>
</feature>
<feature type="site" description="Important for increased permeability to Na(+) when K(+) levels are subphysiological" evidence="1">
    <location>
        <position position="118"/>
    </location>
</feature>
<feature type="site" description="Part of a hydrophobic barrier that is stochastically dewetted and limits ion permeability" evidence="1">
    <location>
        <position position="146"/>
    </location>
</feature>
<feature type="site" description="Part of a hydrophobic barrier that is stochastically dewetted and limits ion permeability" evidence="1">
    <location>
        <position position="261"/>
    </location>
</feature>
<feature type="modified residue" description="Phosphoserine" evidence="21">
    <location>
        <position position="326"/>
    </location>
</feature>
<feature type="glycosylation site" description="N-linked (GlcNAc...) asparagine" evidence="3">
    <location>
        <position position="95"/>
    </location>
</feature>
<feature type="disulfide bond" description="Interchain" evidence="1">
    <location>
        <position position="69"/>
    </location>
</feature>
<feature type="cross-link" description="Glycyl lysine isopeptide (Lys-Gly) (interchain with G-Cter in SUMO)" evidence="1">
    <location>
        <position position="274"/>
    </location>
</feature>
<feature type="mutagenesis site" description="Strongly increases channel activity." evidence="9 10">
    <original>K</original>
    <variation>E</variation>
    <location>
        <position position="274"/>
    </location>
</feature>
<feature type="helix" evidence="22">
    <location>
        <begin position="25"/>
        <end position="66"/>
    </location>
</feature>
<feature type="strand" evidence="22">
    <location>
        <begin position="68"/>
        <end position="70"/>
    </location>
</feature>
<feature type="helix" evidence="22">
    <location>
        <begin position="72"/>
        <end position="88"/>
    </location>
</feature>
<feature type="helix" evidence="23">
    <location>
        <begin position="93"/>
        <end position="96"/>
    </location>
</feature>
<feature type="strand" evidence="22">
    <location>
        <begin position="101"/>
        <end position="103"/>
    </location>
</feature>
<feature type="helix" evidence="22">
    <location>
        <begin position="104"/>
        <end position="115"/>
    </location>
</feature>
<feature type="strand" evidence="22">
    <location>
        <begin position="121"/>
        <end position="123"/>
    </location>
</feature>
<feature type="helix" evidence="22">
    <location>
        <begin position="128"/>
        <end position="160"/>
    </location>
</feature>
<feature type="helix" evidence="22">
    <location>
        <begin position="162"/>
        <end position="172"/>
    </location>
</feature>
<feature type="helix" evidence="22">
    <location>
        <begin position="176"/>
        <end position="195"/>
    </location>
</feature>
<feature type="helix" evidence="22">
    <location>
        <begin position="197"/>
        <end position="206"/>
    </location>
</feature>
<feature type="helix" evidence="22">
    <location>
        <begin position="212"/>
        <end position="224"/>
    </location>
</feature>
<feature type="strand" evidence="22">
    <location>
        <begin position="229"/>
        <end position="231"/>
    </location>
</feature>
<feature type="helix" evidence="22">
    <location>
        <begin position="242"/>
        <end position="269"/>
    </location>
</feature>
<feature type="helix" evidence="22">
    <location>
        <begin position="271"/>
        <end position="279"/>
    </location>
</feature>
<keyword id="KW-0002">3D-structure</keyword>
<keyword id="KW-1003">Cell membrane</keyword>
<keyword id="KW-0966">Cell projection</keyword>
<keyword id="KW-0968">Cytoplasmic vesicle</keyword>
<keyword id="KW-1015">Disulfide bond</keyword>
<keyword id="KW-0967">Endosome</keyword>
<keyword id="KW-0325">Glycoprotein</keyword>
<keyword id="KW-0407">Ion channel</keyword>
<keyword id="KW-0406">Ion transport</keyword>
<keyword id="KW-1017">Isopeptide bond</keyword>
<keyword id="KW-0472">Membrane</keyword>
<keyword id="KW-0597">Phosphoprotein</keyword>
<keyword id="KW-0630">Potassium</keyword>
<keyword id="KW-0631">Potassium channel</keyword>
<keyword id="KW-0633">Potassium transport</keyword>
<keyword id="KW-1185">Reference proteome</keyword>
<keyword id="KW-0770">Synapse</keyword>
<keyword id="KW-0812">Transmembrane</keyword>
<keyword id="KW-1133">Transmembrane helix</keyword>
<keyword id="KW-0813">Transport</keyword>
<keyword id="KW-0832">Ubl conjugation</keyword>
<reference evidence="18" key="1">
    <citation type="submission" date="1997-09" db="EMBL/GenBank/DDBJ databases">
        <title>Cloning and localization of rTWIK, a putative potassium channel with two P domains.</title>
        <authorList>
            <person name="Gan L."/>
            <person name="Joiner W.J."/>
            <person name="Quinn A.M."/>
            <person name="Wang L.-Y."/>
            <person name="Hughes T."/>
            <person name="Kaczmarek L.K."/>
        </authorList>
    </citation>
    <scope>NUCLEOTIDE SEQUENCE [MRNA]</scope>
</reference>
<reference evidence="19" key="2">
    <citation type="journal article" date="2004" name="Genome Res.">
        <title>The status, quality, and expansion of the NIH full-length cDNA project: the Mammalian Gene Collection (MGC).</title>
        <authorList>
            <consortium name="The MGC Project Team"/>
        </authorList>
    </citation>
    <scope>NUCLEOTIDE SEQUENCE [LARGE SCALE MRNA]</scope>
    <source>
        <tissue evidence="19">Prostate</tissue>
    </source>
</reference>
<reference key="3">
    <citation type="journal article" date="1998" name="Am. J. Physiol.">
        <title>Expression of TWIK-1, a novel weakly inward rectifying potassium channel in rat kidney.</title>
        <authorList>
            <person name="Cluzeaud F."/>
            <person name="Reyes R."/>
            <person name="Escoubet B."/>
            <person name="Fay M."/>
            <person name="Lazdunski M."/>
            <person name="Bonvalet J.P."/>
            <person name="Lesage F."/>
            <person name="Farman N."/>
        </authorList>
    </citation>
    <scope>TISSUE SPECIFICITY</scope>
    <scope>SUBCELLULAR LOCATION</scope>
    <scope>SUBUNIT</scope>
</reference>
<reference key="4">
    <citation type="journal article" date="2001" name="J. Neurosci.">
        <title>Cns distribution of members of the two-pore-domain (KCNK) potassium channel family.</title>
        <authorList>
            <person name="Talley E.M."/>
            <person name="Solorzano G."/>
            <person name="Lei Q."/>
            <person name="Kim D."/>
            <person name="Bayliss D.A."/>
        </authorList>
    </citation>
    <scope>TISSUE SPECIFICITY</scope>
</reference>
<reference key="5">
    <citation type="journal article" date="2003" name="Hear. Res.">
        <title>Cellular localization of TWIK-1, a two-pore-domain potassium channel in the rodent inner ear.</title>
        <authorList>
            <person name="Nicolas M.T."/>
            <person name="Barhanin J."/>
            <person name="Reyes R."/>
            <person name="Dememes D."/>
        </authorList>
    </citation>
    <scope>TISSUE SPECIFICITY</scope>
    <scope>SUBCELLULAR LOCATION</scope>
</reference>
<reference key="6">
    <citation type="journal article" date="2007" name="Mol. Pharmacol.">
        <title>Serotonin inhibits neuronal excitability by activating two-pore domain K+ channels in the entorhinal cortex.</title>
        <authorList>
            <person name="Deng P.Y."/>
            <person name="Poudel S.K."/>
            <person name="Rojanathammanee L."/>
            <person name="Porter J.E."/>
            <person name="Lei S."/>
        </authorList>
    </citation>
    <scope>FUNCTION</scope>
    <scope>SUBCELLULAR LOCATION</scope>
    <scope>ACTIVITY REGULATION</scope>
</reference>
<reference key="7">
    <citation type="journal article" date="2008" name="Hear. Res.">
        <title>Distribution of two-pore-domain potassium channels in the adult rat vestibular periphery.</title>
        <authorList>
            <person name="Popper P."/>
            <person name="Winkler J."/>
            <person name="Erbe C.B."/>
            <person name="Lerch-Gaggl A."/>
            <person name="Siebeneich W."/>
            <person name="Wackym P.A."/>
        </authorList>
    </citation>
    <scope>TISSUE SPECIFICITY</scope>
    <scope>SUBCELLULAR LOCATION</scope>
</reference>
<reference key="8">
    <citation type="journal article" date="2009" name="J. Neurosci.">
        <title>TWIK-1 and TREK-1 are potassium channels contributing significantly to astrocyte passive conductance in rat hippocampal slices.</title>
        <authorList>
            <person name="Zhou M."/>
            <person name="Xu G."/>
            <person name="Xie M."/>
            <person name="Zhang X."/>
            <person name="Schools G.P."/>
            <person name="Ma L."/>
            <person name="Kimelberg H.K."/>
            <person name="Chen H."/>
        </authorList>
    </citation>
    <scope>FUNCTION</scope>
    <scope>TRANSPORTER ACTIVITY</scope>
    <scope>SUBCELLULAR LOCATION</scope>
    <scope>TISSUE SPECIFICITY</scope>
    <scope>MUTAGENESIS OF LYS-274</scope>
    <scope>BIOPHYSICOCHEMICAL PROPERTIES</scope>
</reference>
<reference key="9">
    <citation type="journal article" date="2012" name="J. Biol. Chem.">
        <title>Acid-sensitive TWIK and TASK two-pore domain potassium channels change ion selectivity and become permeable to sodium in extracellular acidification.</title>
        <authorList>
            <person name="Ma L."/>
            <person name="Zhang X."/>
            <person name="Zhou M."/>
            <person name="Chen H."/>
        </authorList>
    </citation>
    <scope>FUNCTION</scope>
    <scope>SUBCELLULAR LOCATION</scope>
    <scope>MUTAGENESIS OF LYS-274</scope>
</reference>
<reference key="10">
    <citation type="journal article" date="2012" name="Nat. Commun.">
        <title>Quantitative maps of protein phosphorylation sites across 14 different rat organs and tissues.</title>
        <authorList>
            <person name="Lundby A."/>
            <person name="Secher A."/>
            <person name="Lage K."/>
            <person name="Nordsborg N.B."/>
            <person name="Dmytriyev A."/>
            <person name="Lundby C."/>
            <person name="Olsen J.V."/>
        </authorList>
    </citation>
    <scope>PHOSPHORYLATION [LARGE SCALE ANALYSIS] AT SER-326</scope>
    <scope>IDENTIFICATION BY MASS SPECTROMETRY [LARGE SCALE ANALYSIS]</scope>
</reference>
<reference key="11">
    <citation type="journal article" date="2012" name="Sci. Signal.">
        <title>SUMOylation silences heterodimeric TASK potassium channels containing K2P1 subunits in cerebellar granule neurons.</title>
        <authorList>
            <person name="Plant L.D."/>
            <person name="Zuniga L."/>
            <person name="Araki D."/>
            <person name="Marks J.D."/>
            <person name="Goldstein S.A."/>
        </authorList>
    </citation>
    <scope>TISSUE SPECIFICITY</scope>
</reference>
<reference key="12">
    <citation type="journal article" date="2014" name="Biochem. Biophys. Res. Commun.">
        <title>Differential expression of two-pore domain potassium channels in rat cerebellar granule neurons.</title>
        <authorList>
            <person name="Burgos P."/>
            <person name="Zuniga R."/>
            <person name="Dominguez P."/>
            <person name="Delgado-Lopez F."/>
            <person name="Plant L.D."/>
            <person name="Zuniga L."/>
        </authorList>
    </citation>
    <scope>TISSUE SPECIFICITY</scope>
</reference>
<reference key="13">
    <citation type="journal article" date="2015" name="J. Physiol. (Lond.)">
        <title>The family of K2P channels: salient structural and functional properties.</title>
        <authorList>
            <person name="Feliciangeli S."/>
            <person name="Chatelain F.C."/>
            <person name="Bichet D."/>
            <person name="Lesage F."/>
        </authorList>
    </citation>
    <scope>REVIEW</scope>
</reference>
<reference key="14">
    <citation type="journal article" date="2015" name="Pflugers Arch.">
        <title>Silent but not dumb: how cellular trafficking and pore gating modulate expression of TWIK1 and THIK2.</title>
        <authorList>
            <person name="Bichet D."/>
            <person name="Blin S."/>
            <person name="Feliciangeli S."/>
            <person name="Chatelain F.C."/>
            <person name="Bobak N."/>
            <person name="Lesage F."/>
        </authorList>
    </citation>
    <scope>REVIEW</scope>
</reference>
<sequence>MLQSLAGSSCVRLVERHRSAWCFGFLVLGYLLYLVFGAVVFSSVELPYEDLLRQELRKLKRRFLEEHECLSEPQLEQFLGRVLEASNYGVSVLSNASGNWNWDFTSALFFASTVLSTTGYGHTVPLSDGGKAFCIIYSVIGIPFTLLFLTAVVQRVTVHVTRRPVLYFHIRWGFSKQVVAIVHAVLLGFVTVSCFFFIPAAVFSVLEDDWNFLESFYFCFISLSTIGLGDYVPGEGYNQKFRELYKIGITCYLLLGLIAMLVVLETFCELHELKKFRKMFYVKKDKDEDQVHIMEHDQLSFSSITEQAAGLKEEQKQNEPFVASQSPPYEDGSANH</sequence>
<protein>
    <recommendedName>
        <fullName>Potassium channel subfamily K member 1</fullName>
    </recommendedName>
    <alternativeName>
        <fullName>Inward rectifying potassium channel protein TWIK-1</fullName>
        <shortName>rTWIK</shortName>
    </alternativeName>
    <alternativeName>
        <fullName evidence="14">Potassium channel K2P1</fullName>
    </alternativeName>
</protein>